<sequence length="302" mass="34851">MNTPDIAQVKRFLLNLQDEICQKLEQADGAARFAEDSWQRPGGGGGRSRVLRQGRVFEQAGVNFSHVHGDEMPASATAHRPELAGRSFEALGVSLVIHPENPYIPTSHANVRFFIAEKPGADPVWWFGGGFDLTPFYGFTEDAVHWHQTAFDLCLPFGAEVYPRYKKWCDDYFHLKHRNEQRGIGGLFFDDLNAHGFDQSFRFMQAVGRGFCDAYLPIVERRKALTWGERERDFQLYRRGRYVEFNLVWDRGTLFGLQTGGRTESILMSMPPLVRWEYDYQPREDSPEAALYRDFIVVKEWL</sequence>
<name>HEM6_ERWT9</name>
<feature type="chain" id="PRO_1000119803" description="Oxygen-dependent coproporphyrinogen-III oxidase">
    <location>
        <begin position="1"/>
        <end position="302"/>
    </location>
</feature>
<feature type="region of interest" description="Important for dimerization" evidence="1">
    <location>
        <begin position="242"/>
        <end position="277"/>
    </location>
</feature>
<feature type="active site" description="Proton donor" evidence="1">
    <location>
        <position position="108"/>
    </location>
</feature>
<feature type="binding site" evidence="1">
    <location>
        <position position="94"/>
    </location>
    <ligand>
        <name>substrate</name>
    </ligand>
</feature>
<feature type="binding site" evidence="1">
    <location>
        <position position="98"/>
    </location>
    <ligand>
        <name>a divalent metal cation</name>
        <dbReference type="ChEBI" id="CHEBI:60240"/>
    </ligand>
</feature>
<feature type="binding site" evidence="1">
    <location>
        <position position="108"/>
    </location>
    <ligand>
        <name>a divalent metal cation</name>
        <dbReference type="ChEBI" id="CHEBI:60240"/>
    </ligand>
</feature>
<feature type="binding site" evidence="1">
    <location>
        <begin position="110"/>
        <end position="112"/>
    </location>
    <ligand>
        <name>substrate</name>
    </ligand>
</feature>
<feature type="binding site" evidence="1">
    <location>
        <position position="147"/>
    </location>
    <ligand>
        <name>a divalent metal cation</name>
        <dbReference type="ChEBI" id="CHEBI:60240"/>
    </ligand>
</feature>
<feature type="binding site" evidence="1">
    <location>
        <position position="177"/>
    </location>
    <ligand>
        <name>a divalent metal cation</name>
        <dbReference type="ChEBI" id="CHEBI:60240"/>
    </ligand>
</feature>
<feature type="binding site" evidence="1">
    <location>
        <begin position="260"/>
        <end position="262"/>
    </location>
    <ligand>
        <name>substrate</name>
    </ligand>
</feature>
<feature type="site" description="Important for dimerization" evidence="1">
    <location>
        <position position="177"/>
    </location>
</feature>
<keyword id="KW-0963">Cytoplasm</keyword>
<keyword id="KW-0350">Heme biosynthesis</keyword>
<keyword id="KW-0479">Metal-binding</keyword>
<keyword id="KW-0560">Oxidoreductase</keyword>
<keyword id="KW-0627">Porphyrin biosynthesis</keyword>
<keyword id="KW-1185">Reference proteome</keyword>
<accession>B2VI13</accession>
<reference key="1">
    <citation type="journal article" date="2008" name="Environ. Microbiol.">
        <title>The genome of Erwinia tasmaniensis strain Et1/99, a non-pathogenic bacterium in the genus Erwinia.</title>
        <authorList>
            <person name="Kube M."/>
            <person name="Migdoll A.M."/>
            <person name="Mueller I."/>
            <person name="Kuhl H."/>
            <person name="Beck A."/>
            <person name="Reinhardt R."/>
            <person name="Geider K."/>
        </authorList>
    </citation>
    <scope>NUCLEOTIDE SEQUENCE [LARGE SCALE GENOMIC DNA]</scope>
    <source>
        <strain>DSM 17950 / CFBP 7177 / CIP 109463 / NCPPB 4357 / Et1/99</strain>
    </source>
</reference>
<organism>
    <name type="scientific">Erwinia tasmaniensis (strain DSM 17950 / CFBP 7177 / CIP 109463 / NCPPB 4357 / Et1/99)</name>
    <dbReference type="NCBI Taxonomy" id="465817"/>
    <lineage>
        <taxon>Bacteria</taxon>
        <taxon>Pseudomonadati</taxon>
        <taxon>Pseudomonadota</taxon>
        <taxon>Gammaproteobacteria</taxon>
        <taxon>Enterobacterales</taxon>
        <taxon>Erwiniaceae</taxon>
        <taxon>Erwinia</taxon>
    </lineage>
</organism>
<proteinExistence type="inferred from homology"/>
<comment type="function">
    <text evidence="1">Involved in the heme biosynthesis. Catalyzes the aerobic oxidative decarboxylation of propionate groups of rings A and B of coproporphyrinogen-III to yield the vinyl groups in protoporphyrinogen-IX.</text>
</comment>
<comment type="catalytic activity">
    <reaction evidence="1">
        <text>coproporphyrinogen III + O2 + 2 H(+) = protoporphyrinogen IX + 2 CO2 + 2 H2O</text>
        <dbReference type="Rhea" id="RHEA:18257"/>
        <dbReference type="ChEBI" id="CHEBI:15377"/>
        <dbReference type="ChEBI" id="CHEBI:15378"/>
        <dbReference type="ChEBI" id="CHEBI:15379"/>
        <dbReference type="ChEBI" id="CHEBI:16526"/>
        <dbReference type="ChEBI" id="CHEBI:57307"/>
        <dbReference type="ChEBI" id="CHEBI:57309"/>
        <dbReference type="EC" id="1.3.3.3"/>
    </reaction>
</comment>
<comment type="cofactor">
    <cofactor evidence="1">
        <name>a divalent metal cation</name>
        <dbReference type="ChEBI" id="CHEBI:60240"/>
    </cofactor>
</comment>
<comment type="pathway">
    <text evidence="1">Porphyrin-containing compound metabolism; protoporphyrin-IX biosynthesis; protoporphyrinogen-IX from coproporphyrinogen-III (O2 route): step 1/1.</text>
</comment>
<comment type="subunit">
    <text evidence="1">Homodimer.</text>
</comment>
<comment type="subcellular location">
    <subcellularLocation>
        <location evidence="1">Cytoplasm</location>
    </subcellularLocation>
</comment>
<comment type="similarity">
    <text evidence="1">Belongs to the aerobic coproporphyrinogen-III oxidase family.</text>
</comment>
<evidence type="ECO:0000255" key="1">
    <source>
        <dbReference type="HAMAP-Rule" id="MF_00333"/>
    </source>
</evidence>
<gene>
    <name evidence="1" type="primary">hemF</name>
    <name type="ordered locus">ETA_10850</name>
</gene>
<dbReference type="EC" id="1.3.3.3" evidence="1"/>
<dbReference type="EMBL" id="CU468135">
    <property type="protein sequence ID" value="CAO96131.1"/>
    <property type="molecule type" value="Genomic_DNA"/>
</dbReference>
<dbReference type="RefSeq" id="WP_012440831.1">
    <property type="nucleotide sequence ID" value="NC_010694.1"/>
</dbReference>
<dbReference type="SMR" id="B2VI13"/>
<dbReference type="STRING" id="465817.ETA_10850"/>
<dbReference type="KEGG" id="eta:ETA_10850"/>
<dbReference type="eggNOG" id="COG0408">
    <property type="taxonomic scope" value="Bacteria"/>
</dbReference>
<dbReference type="HOGENOM" id="CLU_026169_0_1_6"/>
<dbReference type="OrthoDB" id="9777553at2"/>
<dbReference type="UniPathway" id="UPA00251">
    <property type="reaction ID" value="UER00322"/>
</dbReference>
<dbReference type="Proteomes" id="UP000001726">
    <property type="component" value="Chromosome"/>
</dbReference>
<dbReference type="GO" id="GO:0005737">
    <property type="term" value="C:cytoplasm"/>
    <property type="evidence" value="ECO:0007669"/>
    <property type="project" value="UniProtKB-SubCell"/>
</dbReference>
<dbReference type="GO" id="GO:0004109">
    <property type="term" value="F:coproporphyrinogen oxidase activity"/>
    <property type="evidence" value="ECO:0007669"/>
    <property type="project" value="UniProtKB-UniRule"/>
</dbReference>
<dbReference type="GO" id="GO:0046872">
    <property type="term" value="F:metal ion binding"/>
    <property type="evidence" value="ECO:0007669"/>
    <property type="project" value="UniProtKB-KW"/>
</dbReference>
<dbReference type="GO" id="GO:0042803">
    <property type="term" value="F:protein homodimerization activity"/>
    <property type="evidence" value="ECO:0000250"/>
    <property type="project" value="UniProtKB"/>
</dbReference>
<dbReference type="GO" id="GO:0006782">
    <property type="term" value="P:protoporphyrinogen IX biosynthetic process"/>
    <property type="evidence" value="ECO:0007669"/>
    <property type="project" value="UniProtKB-UniRule"/>
</dbReference>
<dbReference type="FunFam" id="3.40.1500.10:FF:000001">
    <property type="entry name" value="Oxygen-dependent coproporphyrinogen-III oxidase"/>
    <property type="match status" value="1"/>
</dbReference>
<dbReference type="Gene3D" id="3.40.1500.10">
    <property type="entry name" value="Coproporphyrinogen III oxidase, aerobic"/>
    <property type="match status" value="1"/>
</dbReference>
<dbReference type="HAMAP" id="MF_00333">
    <property type="entry name" value="Coprogen_oxidas"/>
    <property type="match status" value="1"/>
</dbReference>
<dbReference type="InterPro" id="IPR001260">
    <property type="entry name" value="Coprogen_oxidase_aer"/>
</dbReference>
<dbReference type="InterPro" id="IPR036406">
    <property type="entry name" value="Coprogen_oxidase_aer_sf"/>
</dbReference>
<dbReference type="InterPro" id="IPR018375">
    <property type="entry name" value="Coprogen_oxidase_CS"/>
</dbReference>
<dbReference type="NCBIfam" id="NF003727">
    <property type="entry name" value="PRK05330.1"/>
    <property type="match status" value="1"/>
</dbReference>
<dbReference type="PANTHER" id="PTHR10755">
    <property type="entry name" value="COPROPORPHYRINOGEN III OXIDASE, MITOCHONDRIAL"/>
    <property type="match status" value="1"/>
</dbReference>
<dbReference type="PANTHER" id="PTHR10755:SF0">
    <property type="entry name" value="OXYGEN-DEPENDENT COPROPORPHYRINOGEN-III OXIDASE, MITOCHONDRIAL"/>
    <property type="match status" value="1"/>
</dbReference>
<dbReference type="Pfam" id="PF01218">
    <property type="entry name" value="Coprogen_oxidas"/>
    <property type="match status" value="1"/>
</dbReference>
<dbReference type="PIRSF" id="PIRSF000166">
    <property type="entry name" value="Coproporphyri_ox"/>
    <property type="match status" value="1"/>
</dbReference>
<dbReference type="PRINTS" id="PR00073">
    <property type="entry name" value="COPRGNOXDASE"/>
</dbReference>
<dbReference type="SUPFAM" id="SSF102886">
    <property type="entry name" value="Coproporphyrinogen III oxidase"/>
    <property type="match status" value="1"/>
</dbReference>
<dbReference type="PROSITE" id="PS01021">
    <property type="entry name" value="COPROGEN_OXIDASE"/>
    <property type="match status" value="1"/>
</dbReference>
<protein>
    <recommendedName>
        <fullName evidence="1">Oxygen-dependent coproporphyrinogen-III oxidase</fullName>
        <shortName evidence="1">CPO</shortName>
        <shortName evidence="1">Coprogen oxidase</shortName>
        <shortName evidence="1">Coproporphyrinogenase</shortName>
        <ecNumber evidence="1">1.3.3.3</ecNumber>
    </recommendedName>
</protein>